<gene>
    <name type="ORF">F37A4.5</name>
</gene>
<evidence type="ECO:0000255" key="1">
    <source>
        <dbReference type="PROSITE-ProRule" id="PRU01182"/>
    </source>
</evidence>
<evidence type="ECO:0000305" key="2"/>
<keyword id="KW-0378">Hydrolase</keyword>
<keyword id="KW-0479">Metal-binding</keyword>
<keyword id="KW-0482">Metalloprotease</keyword>
<keyword id="KW-0645">Protease</keyword>
<keyword id="KW-1185">Reference proteome</keyword>
<keyword id="KW-0862">Zinc</keyword>
<proteinExistence type="inferred from homology"/>
<protein>
    <recommendedName>
        <fullName>Uncharacterized protein F37A4.5</fullName>
    </recommendedName>
</protein>
<organism>
    <name type="scientific">Caenorhabditis elegans</name>
    <dbReference type="NCBI Taxonomy" id="6239"/>
    <lineage>
        <taxon>Eukaryota</taxon>
        <taxon>Metazoa</taxon>
        <taxon>Ecdysozoa</taxon>
        <taxon>Nematoda</taxon>
        <taxon>Chromadorea</taxon>
        <taxon>Rhabditida</taxon>
        <taxon>Rhabditina</taxon>
        <taxon>Rhabditomorpha</taxon>
        <taxon>Rhabditoidea</taxon>
        <taxon>Rhabditidae</taxon>
        <taxon>Peloderinae</taxon>
        <taxon>Caenorhabditis</taxon>
    </lineage>
</organism>
<feature type="chain" id="PRO_0000213969" description="Uncharacterized protein F37A4.5">
    <location>
        <begin position="1"/>
        <end position="319"/>
    </location>
</feature>
<feature type="domain" description="MPN" evidence="1">
    <location>
        <begin position="29"/>
        <end position="164"/>
    </location>
</feature>
<feature type="short sequence motif" description="JAMM motif" evidence="1">
    <location>
        <begin position="111"/>
        <end position="124"/>
    </location>
</feature>
<feature type="binding site" evidence="1">
    <location>
        <position position="111"/>
    </location>
    <ligand>
        <name>Zn(2+)</name>
        <dbReference type="ChEBI" id="CHEBI:29105"/>
        <note>catalytic</note>
    </ligand>
</feature>
<feature type="binding site" evidence="1">
    <location>
        <position position="113"/>
    </location>
    <ligand>
        <name>Zn(2+)</name>
        <dbReference type="ChEBI" id="CHEBI:29105"/>
        <note>catalytic</note>
    </ligand>
</feature>
<feature type="binding site" evidence="1">
    <location>
        <position position="124"/>
    </location>
    <ligand>
        <name>Zn(2+)</name>
        <dbReference type="ChEBI" id="CHEBI:29105"/>
        <note>catalytic</note>
    </ligand>
</feature>
<name>YPT5_CAEEL</name>
<accession>P41883</accession>
<reference key="1">
    <citation type="journal article" date="1998" name="Science">
        <title>Genome sequence of the nematode C. elegans: a platform for investigating biology.</title>
        <authorList>
            <consortium name="The C. elegans sequencing consortium"/>
        </authorList>
    </citation>
    <scope>NUCLEOTIDE SEQUENCE [LARGE SCALE GENOMIC DNA]</scope>
    <source>
        <strain>Bristol N2</strain>
    </source>
</reference>
<sequence>MDRLIRSLLMNQNKQATDKLDHPDTSETVNISSLALLKMLRHARSGIPLEVMGLMLGDFVDDYTINVTDVFAMPQSGTSVTVESVDPVYQTKHMDLLKLVGRTENVVGWYHSHPGFGCWLSSVDVNTQQSFEALHPRAVAVVVDPIQSVKGKVMLDAFRSVNPLNLQIRPLAPTAEPRQTTSNLGHLTKPSLISVVHGLGTKYYSLNVAYRMGSNEQKMLMCLNKKSWYDQLNMSTYSELEKKQEEKFKSINKLIAVFNKDIDEVKEKPIADKKGKTQEEVKKFGKINAKQQLQMITSSLLNDSLCHQLTAMINAKSMT</sequence>
<dbReference type="EMBL" id="FO081312">
    <property type="protein sequence ID" value="CCD70703.1"/>
    <property type="molecule type" value="Genomic_DNA"/>
</dbReference>
<dbReference type="PIR" id="S44642">
    <property type="entry name" value="S44642"/>
</dbReference>
<dbReference type="RefSeq" id="NP_498470.1">
    <property type="nucleotide sequence ID" value="NM_066069.3"/>
</dbReference>
<dbReference type="SMR" id="P41883"/>
<dbReference type="BioGRID" id="50177">
    <property type="interactions" value="5"/>
</dbReference>
<dbReference type="FunCoup" id="P41883">
    <property type="interactions" value="38"/>
</dbReference>
<dbReference type="IntAct" id="P41883">
    <property type="interactions" value="1"/>
</dbReference>
<dbReference type="STRING" id="6239.F37A4.5.1"/>
<dbReference type="MEROPS" id="M67.A10"/>
<dbReference type="PaxDb" id="6239-F37A4.5.1"/>
<dbReference type="PeptideAtlas" id="P41883"/>
<dbReference type="EnsemblMetazoa" id="F37A4.5.1">
    <property type="protein sequence ID" value="F37A4.5.1"/>
    <property type="gene ID" value="WBGene00018135"/>
</dbReference>
<dbReference type="GeneID" id="185404"/>
<dbReference type="KEGG" id="cel:CELE_F37A4.5"/>
<dbReference type="UCSC" id="F37A4.5">
    <property type="organism name" value="c. elegans"/>
</dbReference>
<dbReference type="AGR" id="WB:WBGene00018135"/>
<dbReference type="CTD" id="185404"/>
<dbReference type="WormBase" id="F37A4.5">
    <property type="protein sequence ID" value="CE00707"/>
    <property type="gene ID" value="WBGene00018135"/>
</dbReference>
<dbReference type="eggNOG" id="KOG1555">
    <property type="taxonomic scope" value="Eukaryota"/>
</dbReference>
<dbReference type="HOGENOM" id="CLU_052991_0_1_1"/>
<dbReference type="InParanoid" id="P41883"/>
<dbReference type="OMA" id="KKSWYDQ"/>
<dbReference type="OrthoDB" id="605656at2759"/>
<dbReference type="PhylomeDB" id="P41883"/>
<dbReference type="PRO" id="PR:P41883"/>
<dbReference type="Proteomes" id="UP000001940">
    <property type="component" value="Chromosome III"/>
</dbReference>
<dbReference type="Bgee" id="WBGene00018135">
    <property type="expression patterns" value="Expressed in embryo and 2 other cell types or tissues"/>
</dbReference>
<dbReference type="GO" id="GO:0005634">
    <property type="term" value="C:nucleus"/>
    <property type="evidence" value="ECO:0000318"/>
    <property type="project" value="GO_Central"/>
</dbReference>
<dbReference type="GO" id="GO:0008541">
    <property type="term" value="C:proteasome regulatory particle, lid subcomplex"/>
    <property type="evidence" value="ECO:0000318"/>
    <property type="project" value="GO_Central"/>
</dbReference>
<dbReference type="GO" id="GO:0046872">
    <property type="term" value="F:metal ion binding"/>
    <property type="evidence" value="ECO:0007669"/>
    <property type="project" value="UniProtKB-KW"/>
</dbReference>
<dbReference type="GO" id="GO:0140492">
    <property type="term" value="F:metal-dependent deubiquitinase activity"/>
    <property type="evidence" value="ECO:0000318"/>
    <property type="project" value="GO_Central"/>
</dbReference>
<dbReference type="GO" id="GO:0070628">
    <property type="term" value="F:proteasome binding"/>
    <property type="evidence" value="ECO:0000318"/>
    <property type="project" value="GO_Central"/>
</dbReference>
<dbReference type="GO" id="GO:0043161">
    <property type="term" value="P:proteasome-mediated ubiquitin-dependent protein catabolic process"/>
    <property type="evidence" value="ECO:0000318"/>
    <property type="project" value="GO_Central"/>
</dbReference>
<dbReference type="CDD" id="cd08069">
    <property type="entry name" value="MPN_RPN11_CSN5"/>
    <property type="match status" value="1"/>
</dbReference>
<dbReference type="FunFam" id="3.40.140.10:FF:000026">
    <property type="entry name" value="26S proteasome non-ATPase regulatory subunit 14"/>
    <property type="match status" value="1"/>
</dbReference>
<dbReference type="Gene3D" id="3.40.140.10">
    <property type="entry name" value="Cytidine Deaminase, domain 2"/>
    <property type="match status" value="1"/>
</dbReference>
<dbReference type="InterPro" id="IPR000555">
    <property type="entry name" value="JAMM/MPN+_dom"/>
</dbReference>
<dbReference type="InterPro" id="IPR050242">
    <property type="entry name" value="JAMM_MPN+_peptidase_M67A"/>
</dbReference>
<dbReference type="InterPro" id="IPR037518">
    <property type="entry name" value="MPN"/>
</dbReference>
<dbReference type="PANTHER" id="PTHR10410">
    <property type="entry name" value="EUKARYOTIC TRANSLATION INITIATION FACTOR 3 -RELATED"/>
    <property type="match status" value="1"/>
</dbReference>
<dbReference type="Pfam" id="PF01398">
    <property type="entry name" value="JAB"/>
    <property type="match status" value="1"/>
</dbReference>
<dbReference type="SMART" id="SM00232">
    <property type="entry name" value="JAB_MPN"/>
    <property type="match status" value="1"/>
</dbReference>
<dbReference type="SUPFAM" id="SSF102712">
    <property type="entry name" value="JAB1/MPN domain"/>
    <property type="match status" value="1"/>
</dbReference>
<dbReference type="PROSITE" id="PS50249">
    <property type="entry name" value="MPN"/>
    <property type="match status" value="1"/>
</dbReference>
<comment type="similarity">
    <text evidence="2">Belongs to the peptidase M67A family.</text>
</comment>